<protein>
    <recommendedName>
        <fullName evidence="1">Large ribosomal subunit protein bL17</fullName>
    </recommendedName>
    <alternativeName>
        <fullName evidence="2">50S ribosomal protein L17</fullName>
    </alternativeName>
</protein>
<proteinExistence type="inferred from homology"/>
<feature type="chain" id="PRO_1000055948" description="Large ribosomal subunit protein bL17">
    <location>
        <begin position="1"/>
        <end position="122"/>
    </location>
</feature>
<dbReference type="EMBL" id="AP009324">
    <property type="protein sequence ID" value="BAF79090.1"/>
    <property type="molecule type" value="Genomic_DNA"/>
</dbReference>
<dbReference type="RefSeq" id="WP_000542274.1">
    <property type="nucleotide sequence ID" value="NZ_CTYB01000025.1"/>
</dbReference>
<dbReference type="SMR" id="A7X5C3"/>
<dbReference type="GeneID" id="98346535"/>
<dbReference type="KEGG" id="saw:SAHV_2207"/>
<dbReference type="HOGENOM" id="CLU_074407_2_2_9"/>
<dbReference type="GO" id="GO:0022625">
    <property type="term" value="C:cytosolic large ribosomal subunit"/>
    <property type="evidence" value="ECO:0007669"/>
    <property type="project" value="TreeGrafter"/>
</dbReference>
<dbReference type="GO" id="GO:0003735">
    <property type="term" value="F:structural constituent of ribosome"/>
    <property type="evidence" value="ECO:0007669"/>
    <property type="project" value="InterPro"/>
</dbReference>
<dbReference type="GO" id="GO:0006412">
    <property type="term" value="P:translation"/>
    <property type="evidence" value="ECO:0007669"/>
    <property type="project" value="UniProtKB-UniRule"/>
</dbReference>
<dbReference type="FunFam" id="3.90.1030.10:FF:000002">
    <property type="entry name" value="50S ribosomal protein L17"/>
    <property type="match status" value="1"/>
</dbReference>
<dbReference type="Gene3D" id="3.90.1030.10">
    <property type="entry name" value="Ribosomal protein L17"/>
    <property type="match status" value="1"/>
</dbReference>
<dbReference type="HAMAP" id="MF_01368">
    <property type="entry name" value="Ribosomal_bL17"/>
    <property type="match status" value="1"/>
</dbReference>
<dbReference type="InterPro" id="IPR000456">
    <property type="entry name" value="Ribosomal_bL17"/>
</dbReference>
<dbReference type="InterPro" id="IPR047859">
    <property type="entry name" value="Ribosomal_bL17_CS"/>
</dbReference>
<dbReference type="InterPro" id="IPR036373">
    <property type="entry name" value="Ribosomal_bL17_sf"/>
</dbReference>
<dbReference type="NCBIfam" id="TIGR00059">
    <property type="entry name" value="L17"/>
    <property type="match status" value="1"/>
</dbReference>
<dbReference type="PANTHER" id="PTHR14413:SF16">
    <property type="entry name" value="LARGE RIBOSOMAL SUBUNIT PROTEIN BL17M"/>
    <property type="match status" value="1"/>
</dbReference>
<dbReference type="PANTHER" id="PTHR14413">
    <property type="entry name" value="RIBOSOMAL PROTEIN L17"/>
    <property type="match status" value="1"/>
</dbReference>
<dbReference type="Pfam" id="PF01196">
    <property type="entry name" value="Ribosomal_L17"/>
    <property type="match status" value="1"/>
</dbReference>
<dbReference type="SUPFAM" id="SSF64263">
    <property type="entry name" value="Prokaryotic ribosomal protein L17"/>
    <property type="match status" value="1"/>
</dbReference>
<dbReference type="PROSITE" id="PS01167">
    <property type="entry name" value="RIBOSOMAL_L17"/>
    <property type="match status" value="1"/>
</dbReference>
<sequence length="122" mass="13748">MGYRKLGRTSDQRKAMLRDLATSLIISERIETTEARAKEVRSVVEKLITLGKKGDLASRRNAAKTLRNVEILNEDETTQTALQKLFGEIAERYTERQGGYTRILKQGPRRGDGAESVIIELV</sequence>
<keyword id="KW-0687">Ribonucleoprotein</keyword>
<keyword id="KW-0689">Ribosomal protein</keyword>
<name>RL17_STAA1</name>
<evidence type="ECO:0000255" key="1">
    <source>
        <dbReference type="HAMAP-Rule" id="MF_01368"/>
    </source>
</evidence>
<evidence type="ECO:0000305" key="2"/>
<comment type="subunit">
    <text evidence="1">Part of the 50S ribosomal subunit. Contacts protein L32.</text>
</comment>
<comment type="similarity">
    <text evidence="1">Belongs to the bacterial ribosomal protein bL17 family.</text>
</comment>
<organism>
    <name type="scientific">Staphylococcus aureus (strain Mu3 / ATCC 700698)</name>
    <dbReference type="NCBI Taxonomy" id="418127"/>
    <lineage>
        <taxon>Bacteria</taxon>
        <taxon>Bacillati</taxon>
        <taxon>Bacillota</taxon>
        <taxon>Bacilli</taxon>
        <taxon>Bacillales</taxon>
        <taxon>Staphylococcaceae</taxon>
        <taxon>Staphylococcus</taxon>
    </lineage>
</organism>
<gene>
    <name evidence="1" type="primary">rplQ</name>
    <name type="ordered locus">SAHV_2207</name>
</gene>
<accession>A7X5C3</accession>
<reference key="1">
    <citation type="journal article" date="2008" name="Antimicrob. Agents Chemother.">
        <title>Mutated response regulator graR is responsible for phenotypic conversion of Staphylococcus aureus from heterogeneous vancomycin-intermediate resistance to vancomycin-intermediate resistance.</title>
        <authorList>
            <person name="Neoh H.-M."/>
            <person name="Cui L."/>
            <person name="Yuzawa H."/>
            <person name="Takeuchi F."/>
            <person name="Matsuo M."/>
            <person name="Hiramatsu K."/>
        </authorList>
    </citation>
    <scope>NUCLEOTIDE SEQUENCE [LARGE SCALE GENOMIC DNA]</scope>
    <source>
        <strain>Mu3 / ATCC 700698</strain>
    </source>
</reference>